<name>SYGB_MYXXD</name>
<gene>
    <name evidence="1" type="primary">glyS</name>
    <name type="ordered locus">MXAN_3101</name>
</gene>
<evidence type="ECO:0000255" key="1">
    <source>
        <dbReference type="HAMAP-Rule" id="MF_00255"/>
    </source>
</evidence>
<reference key="1">
    <citation type="journal article" date="2006" name="Proc. Natl. Acad. Sci. U.S.A.">
        <title>Evolution of sensory complexity recorded in a myxobacterial genome.</title>
        <authorList>
            <person name="Goldman B.S."/>
            <person name="Nierman W.C."/>
            <person name="Kaiser D."/>
            <person name="Slater S.C."/>
            <person name="Durkin A.S."/>
            <person name="Eisen J.A."/>
            <person name="Ronning C.M."/>
            <person name="Barbazuk W.B."/>
            <person name="Blanchard M."/>
            <person name="Field C."/>
            <person name="Halling C."/>
            <person name="Hinkle G."/>
            <person name="Iartchuk O."/>
            <person name="Kim H.S."/>
            <person name="Mackenzie C."/>
            <person name="Madupu R."/>
            <person name="Miller N."/>
            <person name="Shvartsbeyn A."/>
            <person name="Sullivan S.A."/>
            <person name="Vaudin M."/>
            <person name="Wiegand R."/>
            <person name="Kaplan H.B."/>
        </authorList>
    </citation>
    <scope>NUCLEOTIDE SEQUENCE [LARGE SCALE GENOMIC DNA]</scope>
    <source>
        <strain>DK1622</strain>
    </source>
</reference>
<protein>
    <recommendedName>
        <fullName evidence="1">Glycine--tRNA ligase beta subunit</fullName>
        <ecNumber evidence="1">6.1.1.14</ecNumber>
    </recommendedName>
    <alternativeName>
        <fullName evidence="1">Glycyl-tRNA synthetase beta subunit</fullName>
        <shortName evidence="1">GlyRS</shortName>
    </alternativeName>
</protein>
<dbReference type="EC" id="6.1.1.14" evidence="1"/>
<dbReference type="EMBL" id="CP000113">
    <property type="protein sequence ID" value="ABF91890.1"/>
    <property type="molecule type" value="Genomic_DNA"/>
</dbReference>
<dbReference type="RefSeq" id="WP_011553151.1">
    <property type="nucleotide sequence ID" value="NC_008095.1"/>
</dbReference>
<dbReference type="SMR" id="Q1D7R9"/>
<dbReference type="STRING" id="246197.MXAN_3101"/>
<dbReference type="EnsemblBacteria" id="ABF91890">
    <property type="protein sequence ID" value="ABF91890"/>
    <property type="gene ID" value="MXAN_3101"/>
</dbReference>
<dbReference type="GeneID" id="41360462"/>
<dbReference type="KEGG" id="mxa:MXAN_3101"/>
<dbReference type="eggNOG" id="COG0751">
    <property type="taxonomic scope" value="Bacteria"/>
</dbReference>
<dbReference type="HOGENOM" id="CLU_007220_2_2_7"/>
<dbReference type="OrthoDB" id="9775440at2"/>
<dbReference type="Proteomes" id="UP000002402">
    <property type="component" value="Chromosome"/>
</dbReference>
<dbReference type="GO" id="GO:0005829">
    <property type="term" value="C:cytosol"/>
    <property type="evidence" value="ECO:0007669"/>
    <property type="project" value="TreeGrafter"/>
</dbReference>
<dbReference type="GO" id="GO:0004814">
    <property type="term" value="F:arginine-tRNA ligase activity"/>
    <property type="evidence" value="ECO:0007669"/>
    <property type="project" value="InterPro"/>
</dbReference>
<dbReference type="GO" id="GO:0005524">
    <property type="term" value="F:ATP binding"/>
    <property type="evidence" value="ECO:0007669"/>
    <property type="project" value="UniProtKB-UniRule"/>
</dbReference>
<dbReference type="GO" id="GO:0004820">
    <property type="term" value="F:glycine-tRNA ligase activity"/>
    <property type="evidence" value="ECO:0007669"/>
    <property type="project" value="UniProtKB-UniRule"/>
</dbReference>
<dbReference type="GO" id="GO:0006420">
    <property type="term" value="P:arginyl-tRNA aminoacylation"/>
    <property type="evidence" value="ECO:0007669"/>
    <property type="project" value="InterPro"/>
</dbReference>
<dbReference type="GO" id="GO:0006426">
    <property type="term" value="P:glycyl-tRNA aminoacylation"/>
    <property type="evidence" value="ECO:0007669"/>
    <property type="project" value="UniProtKB-UniRule"/>
</dbReference>
<dbReference type="HAMAP" id="MF_00255">
    <property type="entry name" value="Gly_tRNA_synth_beta"/>
    <property type="match status" value="1"/>
</dbReference>
<dbReference type="InterPro" id="IPR008909">
    <property type="entry name" value="DALR_anticod-bd"/>
</dbReference>
<dbReference type="InterPro" id="IPR015944">
    <property type="entry name" value="Gly-tRNA-synth_bsu"/>
</dbReference>
<dbReference type="InterPro" id="IPR006194">
    <property type="entry name" value="Gly-tRNA-synth_heterodimer"/>
</dbReference>
<dbReference type="NCBIfam" id="TIGR00211">
    <property type="entry name" value="glyS"/>
    <property type="match status" value="1"/>
</dbReference>
<dbReference type="PANTHER" id="PTHR30075:SF2">
    <property type="entry name" value="GLYCINE--TRNA LIGASE, CHLOROPLASTIC_MITOCHONDRIAL 2"/>
    <property type="match status" value="1"/>
</dbReference>
<dbReference type="PANTHER" id="PTHR30075">
    <property type="entry name" value="GLYCYL-TRNA SYNTHETASE"/>
    <property type="match status" value="1"/>
</dbReference>
<dbReference type="Pfam" id="PF05746">
    <property type="entry name" value="DALR_1"/>
    <property type="match status" value="1"/>
</dbReference>
<dbReference type="Pfam" id="PF02092">
    <property type="entry name" value="tRNA_synt_2f"/>
    <property type="match status" value="1"/>
</dbReference>
<dbReference type="PRINTS" id="PR01045">
    <property type="entry name" value="TRNASYNTHGB"/>
</dbReference>
<dbReference type="SUPFAM" id="SSF109604">
    <property type="entry name" value="HD-domain/PDEase-like"/>
    <property type="match status" value="1"/>
</dbReference>
<dbReference type="PROSITE" id="PS50861">
    <property type="entry name" value="AA_TRNA_LIGASE_II_GLYAB"/>
    <property type="match status" value="1"/>
</dbReference>
<proteinExistence type="inferred from homology"/>
<accession>Q1D7R9</accession>
<keyword id="KW-0030">Aminoacyl-tRNA synthetase</keyword>
<keyword id="KW-0067">ATP-binding</keyword>
<keyword id="KW-0963">Cytoplasm</keyword>
<keyword id="KW-0436">Ligase</keyword>
<keyword id="KW-0547">Nucleotide-binding</keyword>
<keyword id="KW-0648">Protein biosynthesis</keyword>
<keyword id="KW-1185">Reference proteome</keyword>
<sequence>MARDLLLEVGAEEIPASFIGPALDDLKRVITERMADARLKHGEVRTFGTPRRLAVWVKDVADAGEDIIKEVLGPSAKAAFDAQGKPTKAAEKFAESLKLAVDQLGRATTAKGEYLSARVEEKGRPAADILKDTLHAAVHGINFRKSMRWGDVDTSFARPVQWLVALLGSDVLPVVFGDVTSGRTTRGHRFLSPDAIELKAPAEYEVALEKAHVVADITKRRAQLVEKVRAAASKAGAQLLEDESLVDQVTNLVELPSPVVGTFEERHLDLPPEVLVQEMKSHQRYFSLVDSAGKLQPKFIAVSNTPVRDEQLSLRGYQRVLRARLADGRFFFDEDRKTPLIDRVEKLGRVVWQGQLGSYLEKVERFRTLAVWLGQEAGRAGEAATIERAATLAKADLVTGMVGEFPELQGIMGREYARAGGEPDAVALAIAEHYLPRGAEDALPTQDPGALIGIADRLDSLCGIFAIGKAPTGAADPFALRRACIAIIRLVLGRGYRFSLSAAVDESLRLLAPKIANAKRKAGEPAPREQVLEFFRGRLKALWGEQHRTDVVEAVLSAGFDDLVAAQKRLEALSHIVGRADFQPLAVAFKRVVNIVEKQGRDVQGGETNPQKLVDEPERNLHTAFTQARSTVSGLVRVDDFSGALREITGLKPAVDTFFDKVMVMAEDKALRENRIRLLVEIGALFNQVADFSKIQAETAAAA</sequence>
<comment type="catalytic activity">
    <reaction evidence="1">
        <text>tRNA(Gly) + glycine + ATP = glycyl-tRNA(Gly) + AMP + diphosphate</text>
        <dbReference type="Rhea" id="RHEA:16013"/>
        <dbReference type="Rhea" id="RHEA-COMP:9664"/>
        <dbReference type="Rhea" id="RHEA-COMP:9683"/>
        <dbReference type="ChEBI" id="CHEBI:30616"/>
        <dbReference type="ChEBI" id="CHEBI:33019"/>
        <dbReference type="ChEBI" id="CHEBI:57305"/>
        <dbReference type="ChEBI" id="CHEBI:78442"/>
        <dbReference type="ChEBI" id="CHEBI:78522"/>
        <dbReference type="ChEBI" id="CHEBI:456215"/>
        <dbReference type="EC" id="6.1.1.14"/>
    </reaction>
</comment>
<comment type="subunit">
    <text evidence="1">Tetramer of two alpha and two beta subunits.</text>
</comment>
<comment type="subcellular location">
    <subcellularLocation>
        <location evidence="1">Cytoplasm</location>
    </subcellularLocation>
</comment>
<comment type="similarity">
    <text evidence="1">Belongs to the class-II aminoacyl-tRNA synthetase family.</text>
</comment>
<feature type="chain" id="PRO_1000101304" description="Glycine--tRNA ligase beta subunit">
    <location>
        <begin position="1"/>
        <end position="703"/>
    </location>
</feature>
<organism>
    <name type="scientific">Myxococcus xanthus (strain DK1622)</name>
    <dbReference type="NCBI Taxonomy" id="246197"/>
    <lineage>
        <taxon>Bacteria</taxon>
        <taxon>Pseudomonadati</taxon>
        <taxon>Myxococcota</taxon>
        <taxon>Myxococcia</taxon>
        <taxon>Myxococcales</taxon>
        <taxon>Cystobacterineae</taxon>
        <taxon>Myxococcaceae</taxon>
        <taxon>Myxococcus</taxon>
    </lineage>
</organism>